<gene>
    <name evidence="1" type="primary">mraY</name>
    <name type="ordered locus">VV0611</name>
</gene>
<accession>Q7MNV4</accession>
<proteinExistence type="inferred from homology"/>
<name>MRAY_VIBVY</name>
<comment type="function">
    <text evidence="1">Catalyzes the initial step of the lipid cycle reactions in the biosynthesis of the cell wall peptidoglycan: transfers peptidoglycan precursor phospho-MurNAc-pentapeptide from UDP-MurNAc-pentapeptide onto the lipid carrier undecaprenyl phosphate, yielding undecaprenyl-pyrophosphoryl-MurNAc-pentapeptide, known as lipid I.</text>
</comment>
<comment type="catalytic activity">
    <reaction evidence="1">
        <text>UDP-N-acetyl-alpha-D-muramoyl-L-alanyl-gamma-D-glutamyl-meso-2,6-diaminopimeloyl-D-alanyl-D-alanine + di-trans,octa-cis-undecaprenyl phosphate = di-trans,octa-cis-undecaprenyl diphospho-N-acetyl-alpha-D-muramoyl-L-alanyl-D-glutamyl-meso-2,6-diaminopimeloyl-D-alanyl-D-alanine + UMP</text>
        <dbReference type="Rhea" id="RHEA:28386"/>
        <dbReference type="ChEBI" id="CHEBI:57865"/>
        <dbReference type="ChEBI" id="CHEBI:60392"/>
        <dbReference type="ChEBI" id="CHEBI:61386"/>
        <dbReference type="ChEBI" id="CHEBI:61387"/>
        <dbReference type="EC" id="2.7.8.13"/>
    </reaction>
</comment>
<comment type="cofactor">
    <cofactor evidence="1">
        <name>Mg(2+)</name>
        <dbReference type="ChEBI" id="CHEBI:18420"/>
    </cofactor>
</comment>
<comment type="pathway">
    <text evidence="1">Cell wall biogenesis; peptidoglycan biosynthesis.</text>
</comment>
<comment type="subcellular location">
    <subcellularLocation>
        <location evidence="1">Cell inner membrane</location>
        <topology evidence="1">Multi-pass membrane protein</topology>
    </subcellularLocation>
</comment>
<comment type="similarity">
    <text evidence="1">Belongs to the glycosyltransferase 4 family. MraY subfamily.</text>
</comment>
<organism>
    <name type="scientific">Vibrio vulnificus (strain YJ016)</name>
    <dbReference type="NCBI Taxonomy" id="196600"/>
    <lineage>
        <taxon>Bacteria</taxon>
        <taxon>Pseudomonadati</taxon>
        <taxon>Pseudomonadota</taxon>
        <taxon>Gammaproteobacteria</taxon>
        <taxon>Vibrionales</taxon>
        <taxon>Vibrionaceae</taxon>
        <taxon>Vibrio</taxon>
    </lineage>
</organism>
<reference key="1">
    <citation type="journal article" date="2003" name="Genome Res.">
        <title>Comparative genome analysis of Vibrio vulnificus, a marine pathogen.</title>
        <authorList>
            <person name="Chen C.-Y."/>
            <person name="Wu K.-M."/>
            <person name="Chang Y.-C."/>
            <person name="Chang C.-H."/>
            <person name="Tsai H.-C."/>
            <person name="Liao T.-L."/>
            <person name="Liu Y.-M."/>
            <person name="Chen H.-J."/>
            <person name="Shen A.B.-T."/>
            <person name="Li J.-C."/>
            <person name="Su T.-L."/>
            <person name="Shao C.-P."/>
            <person name="Lee C.-T."/>
            <person name="Hor L.-I."/>
            <person name="Tsai S.-F."/>
        </authorList>
    </citation>
    <scope>NUCLEOTIDE SEQUENCE [LARGE SCALE GENOMIC DNA]</scope>
    <source>
        <strain>YJ016</strain>
    </source>
</reference>
<evidence type="ECO:0000255" key="1">
    <source>
        <dbReference type="HAMAP-Rule" id="MF_00038"/>
    </source>
</evidence>
<sequence>MIIWLAELLQPYFSFFRLFEYLSFRAILSVLTALGLSLWMGPRLIKRLQLLQIGQVVRNEGPESHFSKRGTPTMGGVMILAAISITILLWANLSNPYVWAVLAVLMGYGAVGFVDDYRKVVRKNTDGLIARWKYFWQSAIALVVAFALYAYGKDTAATQLVVPFFKDVMPQLGLMYIVLTYFVIVGTSNAVNLTDGLDGLAIMPTVLVAAGFAVIAWATGNVNFSQYLHIPYLPHASELVVVCTAIVGAGLGFLWFNTYPAQVFMGDVGSLALGGALGTIAVLVRQELVLVIMGGVFVMETLSVILQVGSYKLRGQRIFRMAPIHHHYELKGWPEPRVIVRFWIISMVLVLIGLATLKVR</sequence>
<protein>
    <recommendedName>
        <fullName evidence="1">Phospho-N-acetylmuramoyl-pentapeptide-transferase</fullName>
        <ecNumber evidence="1">2.7.8.13</ecNumber>
    </recommendedName>
    <alternativeName>
        <fullName evidence="1">UDP-MurNAc-pentapeptide phosphotransferase</fullName>
    </alternativeName>
</protein>
<feature type="chain" id="PRO_0000108926" description="Phospho-N-acetylmuramoyl-pentapeptide-transferase">
    <location>
        <begin position="1"/>
        <end position="360"/>
    </location>
</feature>
<feature type="transmembrane region" description="Helical" evidence="1">
    <location>
        <begin position="21"/>
        <end position="41"/>
    </location>
</feature>
<feature type="transmembrane region" description="Helical" evidence="1">
    <location>
        <begin position="73"/>
        <end position="93"/>
    </location>
</feature>
<feature type="transmembrane region" description="Helical" evidence="1">
    <location>
        <begin position="94"/>
        <end position="114"/>
    </location>
</feature>
<feature type="transmembrane region" description="Helical" evidence="1">
    <location>
        <begin position="132"/>
        <end position="152"/>
    </location>
</feature>
<feature type="transmembrane region" description="Helical" evidence="1">
    <location>
        <begin position="168"/>
        <end position="188"/>
    </location>
</feature>
<feature type="transmembrane region" description="Helical" evidence="1">
    <location>
        <begin position="199"/>
        <end position="219"/>
    </location>
</feature>
<feature type="transmembrane region" description="Helical" evidence="1">
    <location>
        <begin position="236"/>
        <end position="256"/>
    </location>
</feature>
<feature type="transmembrane region" description="Helical" evidence="1">
    <location>
        <begin position="263"/>
        <end position="283"/>
    </location>
</feature>
<feature type="transmembrane region" description="Helical" evidence="1">
    <location>
        <begin position="288"/>
        <end position="308"/>
    </location>
</feature>
<feature type="transmembrane region" description="Helical" evidence="1">
    <location>
        <begin position="338"/>
        <end position="358"/>
    </location>
</feature>
<keyword id="KW-0131">Cell cycle</keyword>
<keyword id="KW-0132">Cell division</keyword>
<keyword id="KW-0997">Cell inner membrane</keyword>
<keyword id="KW-1003">Cell membrane</keyword>
<keyword id="KW-0133">Cell shape</keyword>
<keyword id="KW-0961">Cell wall biogenesis/degradation</keyword>
<keyword id="KW-0460">Magnesium</keyword>
<keyword id="KW-0472">Membrane</keyword>
<keyword id="KW-0479">Metal-binding</keyword>
<keyword id="KW-0573">Peptidoglycan synthesis</keyword>
<keyword id="KW-0808">Transferase</keyword>
<keyword id="KW-0812">Transmembrane</keyword>
<keyword id="KW-1133">Transmembrane helix</keyword>
<dbReference type="EC" id="2.7.8.13" evidence="1"/>
<dbReference type="EMBL" id="BA000037">
    <property type="protein sequence ID" value="BAC93375.1"/>
    <property type="molecule type" value="Genomic_DNA"/>
</dbReference>
<dbReference type="RefSeq" id="WP_011149501.1">
    <property type="nucleotide sequence ID" value="NC_005139.1"/>
</dbReference>
<dbReference type="SMR" id="Q7MNV4"/>
<dbReference type="STRING" id="672.VV93_v1c05540"/>
<dbReference type="GeneID" id="93894893"/>
<dbReference type="KEGG" id="vvy:VV0611"/>
<dbReference type="eggNOG" id="COG0472">
    <property type="taxonomic scope" value="Bacteria"/>
</dbReference>
<dbReference type="HOGENOM" id="CLU_023982_0_0_6"/>
<dbReference type="UniPathway" id="UPA00219"/>
<dbReference type="Proteomes" id="UP000002675">
    <property type="component" value="Chromosome I"/>
</dbReference>
<dbReference type="GO" id="GO:0005886">
    <property type="term" value="C:plasma membrane"/>
    <property type="evidence" value="ECO:0007669"/>
    <property type="project" value="UniProtKB-SubCell"/>
</dbReference>
<dbReference type="GO" id="GO:0046872">
    <property type="term" value="F:metal ion binding"/>
    <property type="evidence" value="ECO:0007669"/>
    <property type="project" value="UniProtKB-KW"/>
</dbReference>
<dbReference type="GO" id="GO:0008963">
    <property type="term" value="F:phospho-N-acetylmuramoyl-pentapeptide-transferase activity"/>
    <property type="evidence" value="ECO:0007669"/>
    <property type="project" value="UniProtKB-UniRule"/>
</dbReference>
<dbReference type="GO" id="GO:0051992">
    <property type="term" value="F:UDP-N-acetylmuramoyl-L-alanyl-D-glutamyl-meso-2,6-diaminopimelyl-D-alanyl-D-alanine:undecaprenyl-phosphate transferase activity"/>
    <property type="evidence" value="ECO:0007669"/>
    <property type="project" value="RHEA"/>
</dbReference>
<dbReference type="GO" id="GO:0051301">
    <property type="term" value="P:cell division"/>
    <property type="evidence" value="ECO:0007669"/>
    <property type="project" value="UniProtKB-KW"/>
</dbReference>
<dbReference type="GO" id="GO:0071555">
    <property type="term" value="P:cell wall organization"/>
    <property type="evidence" value="ECO:0007669"/>
    <property type="project" value="UniProtKB-KW"/>
</dbReference>
<dbReference type="GO" id="GO:0009252">
    <property type="term" value="P:peptidoglycan biosynthetic process"/>
    <property type="evidence" value="ECO:0007669"/>
    <property type="project" value="UniProtKB-UniRule"/>
</dbReference>
<dbReference type="GO" id="GO:0008360">
    <property type="term" value="P:regulation of cell shape"/>
    <property type="evidence" value="ECO:0007669"/>
    <property type="project" value="UniProtKB-KW"/>
</dbReference>
<dbReference type="CDD" id="cd06852">
    <property type="entry name" value="GT_MraY"/>
    <property type="match status" value="1"/>
</dbReference>
<dbReference type="HAMAP" id="MF_00038">
    <property type="entry name" value="MraY"/>
    <property type="match status" value="1"/>
</dbReference>
<dbReference type="InterPro" id="IPR000715">
    <property type="entry name" value="Glycosyl_transferase_4"/>
</dbReference>
<dbReference type="InterPro" id="IPR003524">
    <property type="entry name" value="PNAcMuramoyl-5peptid_Trfase"/>
</dbReference>
<dbReference type="InterPro" id="IPR018480">
    <property type="entry name" value="PNAcMuramoyl-5peptid_Trfase_CS"/>
</dbReference>
<dbReference type="NCBIfam" id="TIGR00445">
    <property type="entry name" value="mraY"/>
    <property type="match status" value="1"/>
</dbReference>
<dbReference type="PANTHER" id="PTHR22926">
    <property type="entry name" value="PHOSPHO-N-ACETYLMURAMOYL-PENTAPEPTIDE-TRANSFERASE"/>
    <property type="match status" value="1"/>
</dbReference>
<dbReference type="PANTHER" id="PTHR22926:SF5">
    <property type="entry name" value="PHOSPHO-N-ACETYLMURAMOYL-PENTAPEPTIDE-TRANSFERASE HOMOLOG"/>
    <property type="match status" value="1"/>
</dbReference>
<dbReference type="Pfam" id="PF00953">
    <property type="entry name" value="Glycos_transf_4"/>
    <property type="match status" value="1"/>
</dbReference>
<dbReference type="Pfam" id="PF10555">
    <property type="entry name" value="MraY_sig1"/>
    <property type="match status" value="1"/>
</dbReference>
<dbReference type="PROSITE" id="PS01347">
    <property type="entry name" value="MRAY_1"/>
    <property type="match status" value="1"/>
</dbReference>
<dbReference type="PROSITE" id="PS01348">
    <property type="entry name" value="MRAY_2"/>
    <property type="match status" value="1"/>
</dbReference>